<protein>
    <recommendedName>
        <fullName evidence="1">Lipoyl synthase</fullName>
        <ecNumber evidence="1">2.8.1.8</ecNumber>
    </recommendedName>
    <alternativeName>
        <fullName evidence="1">Lip-syn</fullName>
        <shortName evidence="1">LS</shortName>
    </alternativeName>
    <alternativeName>
        <fullName evidence="1">Lipoate synthase</fullName>
    </alternativeName>
    <alternativeName>
        <fullName evidence="1">Lipoic acid synthase</fullName>
    </alternativeName>
    <alternativeName>
        <fullName evidence="1">Sulfur insertion protein LipA</fullName>
    </alternativeName>
</protein>
<organism>
    <name type="scientific">Acidithiobacillus ferrooxidans (strain ATCC 23270 / DSM 14882 / CIP 104768 / NCIMB 8455)</name>
    <name type="common">Ferrobacillus ferrooxidans (strain ATCC 23270)</name>
    <dbReference type="NCBI Taxonomy" id="243159"/>
    <lineage>
        <taxon>Bacteria</taxon>
        <taxon>Pseudomonadati</taxon>
        <taxon>Pseudomonadota</taxon>
        <taxon>Acidithiobacillia</taxon>
        <taxon>Acidithiobacillales</taxon>
        <taxon>Acidithiobacillaceae</taxon>
        <taxon>Acidithiobacillus</taxon>
    </lineage>
</organism>
<keyword id="KW-0004">4Fe-4S</keyword>
<keyword id="KW-0963">Cytoplasm</keyword>
<keyword id="KW-0408">Iron</keyword>
<keyword id="KW-0411">Iron-sulfur</keyword>
<keyword id="KW-0479">Metal-binding</keyword>
<keyword id="KW-1185">Reference proteome</keyword>
<keyword id="KW-0949">S-adenosyl-L-methionine</keyword>
<keyword id="KW-0808">Transferase</keyword>
<evidence type="ECO:0000255" key="1">
    <source>
        <dbReference type="HAMAP-Rule" id="MF_00206"/>
    </source>
</evidence>
<evidence type="ECO:0000255" key="2">
    <source>
        <dbReference type="PROSITE-ProRule" id="PRU01266"/>
    </source>
</evidence>
<evidence type="ECO:0000256" key="3">
    <source>
        <dbReference type="SAM" id="MobiDB-lite"/>
    </source>
</evidence>
<name>LIPA_ACIF2</name>
<feature type="chain" id="PRO_1000191443" description="Lipoyl synthase">
    <location>
        <begin position="1"/>
        <end position="317"/>
    </location>
</feature>
<feature type="domain" description="Radical SAM core" evidence="2">
    <location>
        <begin position="76"/>
        <end position="293"/>
    </location>
</feature>
<feature type="region of interest" description="Disordered" evidence="3">
    <location>
        <begin position="1"/>
        <end position="28"/>
    </location>
</feature>
<feature type="binding site" evidence="1">
    <location>
        <position position="64"/>
    </location>
    <ligand>
        <name>[4Fe-4S] cluster</name>
        <dbReference type="ChEBI" id="CHEBI:49883"/>
        <label>1</label>
    </ligand>
</feature>
<feature type="binding site" evidence="1">
    <location>
        <position position="69"/>
    </location>
    <ligand>
        <name>[4Fe-4S] cluster</name>
        <dbReference type="ChEBI" id="CHEBI:49883"/>
        <label>1</label>
    </ligand>
</feature>
<feature type="binding site" evidence="1">
    <location>
        <position position="75"/>
    </location>
    <ligand>
        <name>[4Fe-4S] cluster</name>
        <dbReference type="ChEBI" id="CHEBI:49883"/>
        <label>1</label>
    </ligand>
</feature>
<feature type="binding site" evidence="1">
    <location>
        <position position="90"/>
    </location>
    <ligand>
        <name>[4Fe-4S] cluster</name>
        <dbReference type="ChEBI" id="CHEBI:49883"/>
        <label>2</label>
        <note>4Fe-4S-S-AdoMet</note>
    </ligand>
</feature>
<feature type="binding site" evidence="1">
    <location>
        <position position="94"/>
    </location>
    <ligand>
        <name>[4Fe-4S] cluster</name>
        <dbReference type="ChEBI" id="CHEBI:49883"/>
        <label>2</label>
        <note>4Fe-4S-S-AdoMet</note>
    </ligand>
</feature>
<feature type="binding site" evidence="1">
    <location>
        <position position="97"/>
    </location>
    <ligand>
        <name>[4Fe-4S] cluster</name>
        <dbReference type="ChEBI" id="CHEBI:49883"/>
        <label>2</label>
        <note>4Fe-4S-S-AdoMet</note>
    </ligand>
</feature>
<feature type="binding site" evidence="1">
    <location>
        <position position="304"/>
    </location>
    <ligand>
        <name>[4Fe-4S] cluster</name>
        <dbReference type="ChEBI" id="CHEBI:49883"/>
        <label>1</label>
    </ligand>
</feature>
<comment type="function">
    <text evidence="1">Catalyzes the radical-mediated insertion of two sulfur atoms into the C-6 and C-8 positions of the octanoyl moiety bound to the lipoyl domains of lipoate-dependent enzymes, thereby converting the octanoylated domains into lipoylated derivatives.</text>
</comment>
<comment type="catalytic activity">
    <reaction evidence="1">
        <text>[[Fe-S] cluster scaffold protein carrying a second [4Fe-4S](2+) cluster] + N(6)-octanoyl-L-lysyl-[protein] + 2 oxidized [2Fe-2S]-[ferredoxin] + 2 S-adenosyl-L-methionine + 4 H(+) = [[Fe-S] cluster scaffold protein] + N(6)-[(R)-dihydrolipoyl]-L-lysyl-[protein] + 4 Fe(3+) + 2 hydrogen sulfide + 2 5'-deoxyadenosine + 2 L-methionine + 2 reduced [2Fe-2S]-[ferredoxin]</text>
        <dbReference type="Rhea" id="RHEA:16585"/>
        <dbReference type="Rhea" id="RHEA-COMP:9928"/>
        <dbReference type="Rhea" id="RHEA-COMP:10000"/>
        <dbReference type="Rhea" id="RHEA-COMP:10001"/>
        <dbReference type="Rhea" id="RHEA-COMP:10475"/>
        <dbReference type="Rhea" id="RHEA-COMP:14568"/>
        <dbReference type="Rhea" id="RHEA-COMP:14569"/>
        <dbReference type="ChEBI" id="CHEBI:15378"/>
        <dbReference type="ChEBI" id="CHEBI:17319"/>
        <dbReference type="ChEBI" id="CHEBI:29034"/>
        <dbReference type="ChEBI" id="CHEBI:29919"/>
        <dbReference type="ChEBI" id="CHEBI:33722"/>
        <dbReference type="ChEBI" id="CHEBI:33737"/>
        <dbReference type="ChEBI" id="CHEBI:33738"/>
        <dbReference type="ChEBI" id="CHEBI:57844"/>
        <dbReference type="ChEBI" id="CHEBI:59789"/>
        <dbReference type="ChEBI" id="CHEBI:78809"/>
        <dbReference type="ChEBI" id="CHEBI:83100"/>
        <dbReference type="EC" id="2.8.1.8"/>
    </reaction>
</comment>
<comment type="cofactor">
    <cofactor evidence="1">
        <name>[4Fe-4S] cluster</name>
        <dbReference type="ChEBI" id="CHEBI:49883"/>
    </cofactor>
    <text evidence="1">Binds 2 [4Fe-4S] clusters per subunit. One cluster is coordinated with 3 cysteines and an exchangeable S-adenosyl-L-methionine.</text>
</comment>
<comment type="pathway">
    <text evidence="1">Protein modification; protein lipoylation via endogenous pathway; protein N(6)-(lipoyl)lysine from octanoyl-[acyl-carrier-protein]: step 2/2.</text>
</comment>
<comment type="subcellular location">
    <subcellularLocation>
        <location evidence="1">Cytoplasm</location>
    </subcellularLocation>
</comment>
<comment type="similarity">
    <text evidence="1">Belongs to the radical SAM superfamily. Lipoyl synthase family.</text>
</comment>
<dbReference type="EC" id="2.8.1.8" evidence="1"/>
<dbReference type="EMBL" id="CP001219">
    <property type="protein sequence ID" value="ACK80883.1"/>
    <property type="molecule type" value="Genomic_DNA"/>
</dbReference>
<dbReference type="RefSeq" id="WP_012537264.1">
    <property type="nucleotide sequence ID" value="NC_011761.1"/>
</dbReference>
<dbReference type="SMR" id="B7J7N7"/>
<dbReference type="STRING" id="243159.AFE_2570"/>
<dbReference type="PaxDb" id="243159-AFE_2570"/>
<dbReference type="GeneID" id="65281623"/>
<dbReference type="KEGG" id="afr:AFE_2570"/>
<dbReference type="eggNOG" id="COG0320">
    <property type="taxonomic scope" value="Bacteria"/>
</dbReference>
<dbReference type="HOGENOM" id="CLU_033144_2_1_6"/>
<dbReference type="UniPathway" id="UPA00538">
    <property type="reaction ID" value="UER00593"/>
</dbReference>
<dbReference type="Proteomes" id="UP000001362">
    <property type="component" value="Chromosome"/>
</dbReference>
<dbReference type="GO" id="GO:0005737">
    <property type="term" value="C:cytoplasm"/>
    <property type="evidence" value="ECO:0007669"/>
    <property type="project" value="UniProtKB-SubCell"/>
</dbReference>
<dbReference type="GO" id="GO:0051539">
    <property type="term" value="F:4 iron, 4 sulfur cluster binding"/>
    <property type="evidence" value="ECO:0007669"/>
    <property type="project" value="UniProtKB-UniRule"/>
</dbReference>
<dbReference type="GO" id="GO:0016992">
    <property type="term" value="F:lipoate synthase activity"/>
    <property type="evidence" value="ECO:0007669"/>
    <property type="project" value="UniProtKB-UniRule"/>
</dbReference>
<dbReference type="GO" id="GO:0046872">
    <property type="term" value="F:metal ion binding"/>
    <property type="evidence" value="ECO:0007669"/>
    <property type="project" value="UniProtKB-KW"/>
</dbReference>
<dbReference type="CDD" id="cd01335">
    <property type="entry name" value="Radical_SAM"/>
    <property type="match status" value="1"/>
</dbReference>
<dbReference type="FunFam" id="3.20.20.70:FF:000040">
    <property type="entry name" value="Lipoyl synthase"/>
    <property type="match status" value="1"/>
</dbReference>
<dbReference type="Gene3D" id="3.20.20.70">
    <property type="entry name" value="Aldolase class I"/>
    <property type="match status" value="1"/>
</dbReference>
<dbReference type="HAMAP" id="MF_00206">
    <property type="entry name" value="Lipoyl_synth"/>
    <property type="match status" value="1"/>
</dbReference>
<dbReference type="InterPro" id="IPR013785">
    <property type="entry name" value="Aldolase_TIM"/>
</dbReference>
<dbReference type="InterPro" id="IPR006638">
    <property type="entry name" value="Elp3/MiaA/NifB-like_rSAM"/>
</dbReference>
<dbReference type="InterPro" id="IPR031691">
    <property type="entry name" value="LIAS_N"/>
</dbReference>
<dbReference type="InterPro" id="IPR003698">
    <property type="entry name" value="Lipoyl_synth"/>
</dbReference>
<dbReference type="InterPro" id="IPR007197">
    <property type="entry name" value="rSAM"/>
</dbReference>
<dbReference type="NCBIfam" id="TIGR00510">
    <property type="entry name" value="lipA"/>
    <property type="match status" value="1"/>
</dbReference>
<dbReference type="NCBIfam" id="NF004019">
    <property type="entry name" value="PRK05481.1"/>
    <property type="match status" value="1"/>
</dbReference>
<dbReference type="NCBIfam" id="NF009544">
    <property type="entry name" value="PRK12928.1"/>
    <property type="match status" value="1"/>
</dbReference>
<dbReference type="PANTHER" id="PTHR10949">
    <property type="entry name" value="LIPOYL SYNTHASE"/>
    <property type="match status" value="1"/>
</dbReference>
<dbReference type="PANTHER" id="PTHR10949:SF0">
    <property type="entry name" value="LIPOYL SYNTHASE, MITOCHONDRIAL"/>
    <property type="match status" value="1"/>
</dbReference>
<dbReference type="Pfam" id="PF16881">
    <property type="entry name" value="LIAS_N"/>
    <property type="match status" value="1"/>
</dbReference>
<dbReference type="Pfam" id="PF04055">
    <property type="entry name" value="Radical_SAM"/>
    <property type="match status" value="1"/>
</dbReference>
<dbReference type="PIRSF" id="PIRSF005963">
    <property type="entry name" value="Lipoyl_synth"/>
    <property type="match status" value="1"/>
</dbReference>
<dbReference type="SFLD" id="SFLDF00271">
    <property type="entry name" value="lipoyl_synthase"/>
    <property type="match status" value="1"/>
</dbReference>
<dbReference type="SFLD" id="SFLDS00029">
    <property type="entry name" value="Radical_SAM"/>
    <property type="match status" value="1"/>
</dbReference>
<dbReference type="SMART" id="SM00729">
    <property type="entry name" value="Elp3"/>
    <property type="match status" value="1"/>
</dbReference>
<dbReference type="SUPFAM" id="SSF102114">
    <property type="entry name" value="Radical SAM enzymes"/>
    <property type="match status" value="1"/>
</dbReference>
<dbReference type="PROSITE" id="PS51918">
    <property type="entry name" value="RADICAL_SAM"/>
    <property type="match status" value="1"/>
</dbReference>
<reference key="1">
    <citation type="journal article" date="2008" name="BMC Genomics">
        <title>Acidithiobacillus ferrooxidans metabolism: from genome sequence to industrial applications.</title>
        <authorList>
            <person name="Valdes J."/>
            <person name="Pedroso I."/>
            <person name="Quatrini R."/>
            <person name="Dodson R.J."/>
            <person name="Tettelin H."/>
            <person name="Blake R. II"/>
            <person name="Eisen J.A."/>
            <person name="Holmes D.S."/>
        </authorList>
    </citation>
    <scope>NUCLEOTIDE SEQUENCE [LARGE SCALE GENOMIC DNA]</scope>
    <source>
        <strain>ATCC 23270 / DSM 14882 / CIP 104768 / NCIMB 8455</strain>
    </source>
</reference>
<accession>B7J7N7</accession>
<sequence>MDSQPQSKKAARGADKTARNPIPIIPAPTERLPKPQWLRVRSPLSPEVDQLKKILRDAALHTVCEEASCPNLGECFGGGTATFMILGDICTRRCPFCDVAHGRPEAPDPLESVHLARTVASMKLRFVVITSVDRDDLRDGGARHFAEVISALREHCPELHVEILVPDFRGRVANALAAFRETPPDVFNHNLETVPRLYLQARPGADYHHSLQLLAAFKAQHPQIPTKSGLMLGLGEEIDEIRGVMRDLRQAGCELLTIGQYLAPSRHHLPVARFVPPEEFQQLQRDGMAMGFRHVASGPLVRSSYHAERSFHEIGGD</sequence>
<gene>
    <name evidence="1" type="primary">lipA</name>
    <name type="ordered locus">AFE_2570</name>
</gene>
<proteinExistence type="inferred from homology"/>